<feature type="chain" id="PRO_0000215668" description="Pre-mRNA-splicing factor cwc22">
    <location>
        <begin position="1"/>
        <end position="881"/>
    </location>
</feature>
<feature type="domain" description="MIF4G" evidence="2">
    <location>
        <begin position="145"/>
        <end position="328"/>
    </location>
</feature>
<feature type="domain" description="MI" evidence="2">
    <location>
        <begin position="427"/>
        <end position="543"/>
    </location>
</feature>
<feature type="region of interest" description="Disordered" evidence="3">
    <location>
        <begin position="1"/>
        <end position="98"/>
    </location>
</feature>
<feature type="region of interest" description="Disordered" evidence="3">
    <location>
        <begin position="387"/>
        <end position="420"/>
    </location>
</feature>
<feature type="region of interest" description="Disordered" evidence="3">
    <location>
        <begin position="623"/>
        <end position="881"/>
    </location>
</feature>
<feature type="compositionally biased region" description="Basic residues" evidence="3">
    <location>
        <begin position="29"/>
        <end position="46"/>
    </location>
</feature>
<feature type="compositionally biased region" description="Basic and acidic residues" evidence="3">
    <location>
        <begin position="51"/>
        <end position="98"/>
    </location>
</feature>
<feature type="compositionally biased region" description="Acidic residues" evidence="3">
    <location>
        <begin position="391"/>
        <end position="413"/>
    </location>
</feature>
<feature type="compositionally biased region" description="Low complexity" evidence="3">
    <location>
        <begin position="641"/>
        <end position="669"/>
    </location>
</feature>
<feature type="compositionally biased region" description="Basic residues" evidence="3">
    <location>
        <begin position="670"/>
        <end position="680"/>
    </location>
</feature>
<feature type="compositionally biased region" description="Low complexity" evidence="3">
    <location>
        <begin position="681"/>
        <end position="710"/>
    </location>
</feature>
<feature type="compositionally biased region" description="Basic residues" evidence="3">
    <location>
        <begin position="726"/>
        <end position="743"/>
    </location>
</feature>
<feature type="compositionally biased region" description="Low complexity" evidence="3">
    <location>
        <begin position="748"/>
        <end position="757"/>
    </location>
</feature>
<feature type="compositionally biased region" description="Low complexity" evidence="3">
    <location>
        <begin position="772"/>
        <end position="781"/>
    </location>
</feature>
<feature type="compositionally biased region" description="Basic residues" evidence="3">
    <location>
        <begin position="861"/>
        <end position="875"/>
    </location>
</feature>
<comment type="function">
    <text evidence="1">Involved in pre-mRNA splicing.</text>
</comment>
<comment type="subunit">
    <text evidence="1">Associated with the spliceosome.</text>
</comment>
<comment type="subcellular location">
    <subcellularLocation>
        <location evidence="1">Cytoplasm</location>
    </subcellularLocation>
    <subcellularLocation>
        <location evidence="1">Nucleus</location>
    </subcellularLocation>
</comment>
<comment type="similarity">
    <text evidence="4">Belongs to the CWC22 family.</text>
</comment>
<organism>
    <name type="scientific">Aspergillus fumigatus (strain ATCC MYA-4609 / CBS 101355 / FGSC A1100 / Af293)</name>
    <name type="common">Neosartorya fumigata</name>
    <dbReference type="NCBI Taxonomy" id="330879"/>
    <lineage>
        <taxon>Eukaryota</taxon>
        <taxon>Fungi</taxon>
        <taxon>Dikarya</taxon>
        <taxon>Ascomycota</taxon>
        <taxon>Pezizomycotina</taxon>
        <taxon>Eurotiomycetes</taxon>
        <taxon>Eurotiomycetidae</taxon>
        <taxon>Eurotiales</taxon>
        <taxon>Aspergillaceae</taxon>
        <taxon>Aspergillus</taxon>
        <taxon>Aspergillus subgen. Fumigati</taxon>
    </lineage>
</organism>
<accession>Q4WKB9</accession>
<keyword id="KW-0963">Cytoplasm</keyword>
<keyword id="KW-0507">mRNA processing</keyword>
<keyword id="KW-0508">mRNA splicing</keyword>
<keyword id="KW-0539">Nucleus</keyword>
<keyword id="KW-1185">Reference proteome</keyword>
<keyword id="KW-0747">Spliceosome</keyword>
<name>CWC22_ASPFU</name>
<sequence length="881" mass="100843">MTDSVVLQSAVRVPTPPPGTSYSPQPSVSRKRSPPSRSPSPRRRRSPPGDSLKENGDAPRIDPERAVERERQLAERLRQHEKREAARKPMTEEEKQAAAKAEYEKLLNMRSGGTYIPPARLRALQAQITDKNSKEYQRMAWEALKKSINGLINKVNVSNIKFIVPELFGENLVRGRGLFCRSIMKAQAASLPFTPIYAAMAAIVNTKLPQVGELLLNRLIVQFRKAFKRNDKAVCISSTTFIAHLCNQQVAHEMLAAQILLLLLHKPTDDSVEIAVGLTREVGQHLEEMSPPIALAVFDQFRNILHEADIDKRVQYMIEVLFQVRKDRYKDNPAIKDELDLVEEEDQITHRIGLDDEIDTQDGLNVFKYDPQWEEHEEAYKKLKAEILGEGSDDDEEDEDETDESSDEEEEERQMEIKDQSNTDLVNLRRTIYLTIMSSIDFEECCHKLMKISLPPGLEPELPSMIIECCSQERTYSKFYGLIGERFAKINRLWSDLFEAAFAKYYDTIHRYETNRLRNIARFFGHMLSTDAIGWHVMSVIHLNEDETTSSSRIFIKILFQDLGEHLGLAKLQERMRDEILRPSFEGLFPLDNPRNTRFSINYFTSIGFGILTEDMREHLKNLPKPTVPALPARDAESDSESVSSHSTCSTCTGSSRSRSRSYSYSRSPSRSRGRRRSISRGRSYSRSVSGSSRGRSYTPSYSRSRSPVPKSRRRSVSYSRSRSPAGRRRSSVSRTPPRRVRGKSYDSRSPSRSVTPPRRRTSYSRRDRSYSRSLSRSVTPPLRAVDARARGRRYSSQSLSPPRRRAERSVSPQRPPPGRRPRGDSLSRSPSPPPRYAREQRRRRNSSSASASRSPPHRDSNRRRSLSRTPPRRGRASDYL</sequence>
<gene>
    <name type="primary">cwc22</name>
    <name type="ORF">AFUA_1G03010</name>
</gene>
<evidence type="ECO:0000250" key="1"/>
<evidence type="ECO:0000255" key="2">
    <source>
        <dbReference type="PROSITE-ProRule" id="PRU00698"/>
    </source>
</evidence>
<evidence type="ECO:0000256" key="3">
    <source>
        <dbReference type="SAM" id="MobiDB-lite"/>
    </source>
</evidence>
<evidence type="ECO:0000305" key="4"/>
<proteinExistence type="inferred from homology"/>
<dbReference type="EMBL" id="AAHF01000007">
    <property type="protein sequence ID" value="EAL88013.1"/>
    <property type="molecule type" value="Genomic_DNA"/>
</dbReference>
<dbReference type="RefSeq" id="XP_750051.1">
    <property type="nucleotide sequence ID" value="XM_744958.1"/>
</dbReference>
<dbReference type="SMR" id="Q4WKB9"/>
<dbReference type="FunCoup" id="Q4WKB9">
    <property type="interactions" value="903"/>
</dbReference>
<dbReference type="STRING" id="330879.Q4WKB9"/>
<dbReference type="EnsemblFungi" id="EAL88013">
    <property type="protein sequence ID" value="EAL88013"/>
    <property type="gene ID" value="AFUA_1G03010"/>
</dbReference>
<dbReference type="GeneID" id="3507791"/>
<dbReference type="KEGG" id="afm:AFUA_1G03010"/>
<dbReference type="VEuPathDB" id="FungiDB:Afu1g03010"/>
<dbReference type="eggNOG" id="KOG2140">
    <property type="taxonomic scope" value="Eukaryota"/>
</dbReference>
<dbReference type="HOGENOM" id="CLU_006308_0_2_1"/>
<dbReference type="InParanoid" id="Q4WKB9"/>
<dbReference type="OMA" id="ILTEDMR"/>
<dbReference type="OrthoDB" id="3938623at2759"/>
<dbReference type="Proteomes" id="UP000002530">
    <property type="component" value="Chromosome 1"/>
</dbReference>
<dbReference type="GO" id="GO:0071013">
    <property type="term" value="C:catalytic step 2 spliceosome"/>
    <property type="evidence" value="ECO:0000318"/>
    <property type="project" value="GO_Central"/>
</dbReference>
<dbReference type="GO" id="GO:0005737">
    <property type="term" value="C:cytoplasm"/>
    <property type="evidence" value="ECO:0007669"/>
    <property type="project" value="UniProtKB-SubCell"/>
</dbReference>
<dbReference type="GO" id="GO:0003723">
    <property type="term" value="F:RNA binding"/>
    <property type="evidence" value="ECO:0000318"/>
    <property type="project" value="GO_Central"/>
</dbReference>
<dbReference type="GO" id="GO:0000398">
    <property type="term" value="P:mRNA splicing, via spliceosome"/>
    <property type="evidence" value="ECO:0000318"/>
    <property type="project" value="GO_Central"/>
</dbReference>
<dbReference type="FunFam" id="1.25.40.180:FF:000004">
    <property type="entry name" value="pre-mRNA-splicing factor CWC22 homolog"/>
    <property type="match status" value="1"/>
</dbReference>
<dbReference type="Gene3D" id="1.25.40.180">
    <property type="match status" value="1"/>
</dbReference>
<dbReference type="InterPro" id="IPR016024">
    <property type="entry name" value="ARM-type_fold"/>
</dbReference>
<dbReference type="InterPro" id="IPR050781">
    <property type="entry name" value="CWC22_splicing_factor"/>
</dbReference>
<dbReference type="InterPro" id="IPR003891">
    <property type="entry name" value="Initiation_fac_eIF4g_MI"/>
</dbReference>
<dbReference type="InterPro" id="IPR003890">
    <property type="entry name" value="MIF4G-like_typ-3"/>
</dbReference>
<dbReference type="PANTHER" id="PTHR18034">
    <property type="entry name" value="CELL CYCLE CONTROL PROTEIN CWF22-RELATED"/>
    <property type="match status" value="1"/>
</dbReference>
<dbReference type="PANTHER" id="PTHR18034:SF3">
    <property type="entry name" value="PRE-MRNA-SPLICING FACTOR CWC22 HOMOLOG"/>
    <property type="match status" value="1"/>
</dbReference>
<dbReference type="Pfam" id="PF02847">
    <property type="entry name" value="MA3"/>
    <property type="match status" value="1"/>
</dbReference>
<dbReference type="SMART" id="SM00544">
    <property type="entry name" value="MA3"/>
    <property type="match status" value="1"/>
</dbReference>
<dbReference type="SMART" id="SM00543">
    <property type="entry name" value="MIF4G"/>
    <property type="match status" value="1"/>
</dbReference>
<dbReference type="SUPFAM" id="SSF48371">
    <property type="entry name" value="ARM repeat"/>
    <property type="match status" value="1"/>
</dbReference>
<dbReference type="PROSITE" id="PS51366">
    <property type="entry name" value="MI"/>
    <property type="match status" value="1"/>
</dbReference>
<protein>
    <recommendedName>
        <fullName>Pre-mRNA-splicing factor cwc22</fullName>
    </recommendedName>
</protein>
<reference key="1">
    <citation type="journal article" date="2005" name="Nature">
        <title>Genomic sequence of the pathogenic and allergenic filamentous fungus Aspergillus fumigatus.</title>
        <authorList>
            <person name="Nierman W.C."/>
            <person name="Pain A."/>
            <person name="Anderson M.J."/>
            <person name="Wortman J.R."/>
            <person name="Kim H.S."/>
            <person name="Arroyo J."/>
            <person name="Berriman M."/>
            <person name="Abe K."/>
            <person name="Archer D.B."/>
            <person name="Bermejo C."/>
            <person name="Bennett J.W."/>
            <person name="Bowyer P."/>
            <person name="Chen D."/>
            <person name="Collins M."/>
            <person name="Coulsen R."/>
            <person name="Davies R."/>
            <person name="Dyer P.S."/>
            <person name="Farman M.L."/>
            <person name="Fedorova N."/>
            <person name="Fedorova N.D."/>
            <person name="Feldblyum T.V."/>
            <person name="Fischer R."/>
            <person name="Fosker N."/>
            <person name="Fraser A."/>
            <person name="Garcia J.L."/>
            <person name="Garcia M.J."/>
            <person name="Goble A."/>
            <person name="Goldman G.H."/>
            <person name="Gomi K."/>
            <person name="Griffith-Jones S."/>
            <person name="Gwilliam R."/>
            <person name="Haas B.J."/>
            <person name="Haas H."/>
            <person name="Harris D.E."/>
            <person name="Horiuchi H."/>
            <person name="Huang J."/>
            <person name="Humphray S."/>
            <person name="Jimenez J."/>
            <person name="Keller N."/>
            <person name="Khouri H."/>
            <person name="Kitamoto K."/>
            <person name="Kobayashi T."/>
            <person name="Konzack S."/>
            <person name="Kulkarni R."/>
            <person name="Kumagai T."/>
            <person name="Lafton A."/>
            <person name="Latge J.-P."/>
            <person name="Li W."/>
            <person name="Lord A."/>
            <person name="Lu C."/>
            <person name="Majoros W.H."/>
            <person name="May G.S."/>
            <person name="Miller B.L."/>
            <person name="Mohamoud Y."/>
            <person name="Molina M."/>
            <person name="Monod M."/>
            <person name="Mouyna I."/>
            <person name="Mulligan S."/>
            <person name="Murphy L.D."/>
            <person name="O'Neil S."/>
            <person name="Paulsen I."/>
            <person name="Penalva M.A."/>
            <person name="Pertea M."/>
            <person name="Price C."/>
            <person name="Pritchard B.L."/>
            <person name="Quail M.A."/>
            <person name="Rabbinowitsch E."/>
            <person name="Rawlins N."/>
            <person name="Rajandream M.A."/>
            <person name="Reichard U."/>
            <person name="Renauld H."/>
            <person name="Robson G.D."/>
            <person name="Rodriguez de Cordoba S."/>
            <person name="Rodriguez-Pena J.M."/>
            <person name="Ronning C.M."/>
            <person name="Rutter S."/>
            <person name="Salzberg S.L."/>
            <person name="Sanchez M."/>
            <person name="Sanchez-Ferrero J.C."/>
            <person name="Saunders D."/>
            <person name="Seeger K."/>
            <person name="Squares R."/>
            <person name="Squares S."/>
            <person name="Takeuchi M."/>
            <person name="Tekaia F."/>
            <person name="Turner G."/>
            <person name="Vazquez de Aldana C.R."/>
            <person name="Weidman J."/>
            <person name="White O."/>
            <person name="Woodward J.R."/>
            <person name="Yu J.-H."/>
            <person name="Fraser C.M."/>
            <person name="Galagan J.E."/>
            <person name="Asai K."/>
            <person name="Machida M."/>
            <person name="Hall N."/>
            <person name="Barrell B.G."/>
            <person name="Denning D.W."/>
        </authorList>
    </citation>
    <scope>NUCLEOTIDE SEQUENCE [LARGE SCALE GENOMIC DNA]</scope>
    <source>
        <strain>ATCC MYA-4609 / CBS 101355 / FGSC A1100 / Af293</strain>
    </source>
</reference>